<protein>
    <recommendedName>
        <fullName>1,3-beta-glucanosyltransferase GAS4</fullName>
        <ecNumber>2.4.1.-</ecNumber>
    </recommendedName>
    <alternativeName>
        <fullName>Glycolipid-anchored surface protein 4</fullName>
    </alternativeName>
</protein>
<keyword id="KW-1003">Cell membrane</keyword>
<keyword id="KW-0961">Cell wall biogenesis/degradation</keyword>
<keyword id="KW-1015">Disulfide bond</keyword>
<keyword id="KW-0325">Glycoprotein</keyword>
<keyword id="KW-0336">GPI-anchor</keyword>
<keyword id="KW-0449">Lipoprotein</keyword>
<keyword id="KW-0472">Membrane</keyword>
<keyword id="KW-1185">Reference proteome</keyword>
<keyword id="KW-0732">Signal</keyword>
<keyword id="KW-0808">Transferase</keyword>
<sequence>MMVFSSTFIFLILELVVLCEASVHTIQIKDKHFVDTVTGKPFFIKGVDYQPGGSSDVSEKQDPLSNPDACARDILLFQELGINTVRIYSINPDLNHDACMTMLAMAGIYLILDVNSPLQNQHLNRYEPWTTYNEVYLEHVFKVVEQFSHYNNTLGFFAGNEIVNDKRSAQYSPAYVKELIGTMKNYISAHSPRTIPVGYSAADDLNYRVSLSEYLECKDDDKPENSVDFYGVNSYQWCGQQTMQTSGYDTLVDAYRSYSKPVFFSEFGCNKVLPRQFQEIGYLFSEEMYSVFCGGLVYEFSQEDNNYGLVEYQEDDSVQLLADFEKLKSHYQNIEFPSMKTLKETVQMEETPSCAEDYENLKIESKIAKNLGSSLIKKGVKVEKGKYIDIHEDQLSTNVTILDKHGDRWNGPKKIEIRQSLTLADLEGEEQEDADEDKDDLKRKHRNSASISGPLLPLGLCLLFFTFSLFF</sequence>
<reference key="1">
    <citation type="journal article" date="1996" name="Yeast">
        <title>Sequence analysis of a 12 801 bp fragment of the left arm of yeast chromosome XV containing a putative 6-phosphofructo-2-kinase gene, a gene for a possible glycophospholipid-anchored surface protein and six other open reading frames.</title>
        <authorList>
            <person name="Aldea M."/>
            <person name="Piedrafita L."/>
            <person name="Casas C."/>
            <person name="Casamayor A."/>
            <person name="Khalid H."/>
            <person name="Balcells L."/>
            <person name="Arino J."/>
            <person name="Herrero E."/>
        </authorList>
    </citation>
    <scope>NUCLEOTIDE SEQUENCE [GENOMIC DNA]</scope>
    <source>
        <strain>ATCC 96604 / S288c / FY1679</strain>
    </source>
</reference>
<reference key="2">
    <citation type="journal article" date="1997" name="Nature">
        <title>The nucleotide sequence of Saccharomyces cerevisiae chromosome XV.</title>
        <authorList>
            <person name="Dujon B."/>
            <person name="Albermann K."/>
            <person name="Aldea M."/>
            <person name="Alexandraki D."/>
            <person name="Ansorge W."/>
            <person name="Arino J."/>
            <person name="Benes V."/>
            <person name="Bohn C."/>
            <person name="Bolotin-Fukuhara M."/>
            <person name="Bordonne R."/>
            <person name="Boyer J."/>
            <person name="Camasses A."/>
            <person name="Casamayor A."/>
            <person name="Casas C."/>
            <person name="Cheret G."/>
            <person name="Cziepluch C."/>
            <person name="Daignan-Fornier B."/>
            <person name="Dang V.-D."/>
            <person name="de Haan M."/>
            <person name="Delius H."/>
            <person name="Durand P."/>
            <person name="Fairhead C."/>
            <person name="Feldmann H."/>
            <person name="Gaillon L."/>
            <person name="Galisson F."/>
            <person name="Gamo F.-J."/>
            <person name="Gancedo C."/>
            <person name="Goffeau A."/>
            <person name="Goulding S.E."/>
            <person name="Grivell L.A."/>
            <person name="Habbig B."/>
            <person name="Hand N.J."/>
            <person name="Hani J."/>
            <person name="Hattenhorst U."/>
            <person name="Hebling U."/>
            <person name="Hernando Y."/>
            <person name="Herrero E."/>
            <person name="Heumann K."/>
            <person name="Hiesel R."/>
            <person name="Hilger F."/>
            <person name="Hofmann B."/>
            <person name="Hollenberg C.P."/>
            <person name="Hughes B."/>
            <person name="Jauniaux J.-C."/>
            <person name="Kalogeropoulos A."/>
            <person name="Katsoulou C."/>
            <person name="Kordes E."/>
            <person name="Lafuente M.J."/>
            <person name="Landt O."/>
            <person name="Louis E.J."/>
            <person name="Maarse A.C."/>
            <person name="Madania A."/>
            <person name="Mannhaupt G."/>
            <person name="Marck C."/>
            <person name="Martin R.P."/>
            <person name="Mewes H.-W."/>
            <person name="Michaux G."/>
            <person name="Paces V."/>
            <person name="Parle-McDermott A.G."/>
            <person name="Pearson B.M."/>
            <person name="Perrin A."/>
            <person name="Pettersson B."/>
            <person name="Poch O."/>
            <person name="Pohl T.M."/>
            <person name="Poirey R."/>
            <person name="Portetelle D."/>
            <person name="Pujol A."/>
            <person name="Purnelle B."/>
            <person name="Ramezani Rad M."/>
            <person name="Rechmann S."/>
            <person name="Schwager C."/>
            <person name="Schweizer M."/>
            <person name="Sor F."/>
            <person name="Sterky F."/>
            <person name="Tarassov I.A."/>
            <person name="Teodoru C."/>
            <person name="Tettelin H."/>
            <person name="Thierry A."/>
            <person name="Tobiasch E."/>
            <person name="Tzermia M."/>
            <person name="Uhlen M."/>
            <person name="Unseld M."/>
            <person name="Valens M."/>
            <person name="Vandenbol M."/>
            <person name="Vetter I."/>
            <person name="Vlcek C."/>
            <person name="Voet M."/>
            <person name="Volckaert G."/>
            <person name="Voss H."/>
            <person name="Wambutt R."/>
            <person name="Wedler H."/>
            <person name="Wiemann S."/>
            <person name="Winsor B."/>
            <person name="Wolfe K.H."/>
            <person name="Zollner A."/>
            <person name="Zumstein E."/>
            <person name="Kleine K."/>
        </authorList>
    </citation>
    <scope>NUCLEOTIDE SEQUENCE [LARGE SCALE GENOMIC DNA]</scope>
    <source>
        <strain>ATCC 204508 / S288c</strain>
    </source>
</reference>
<reference key="3">
    <citation type="journal article" date="2014" name="G3 (Bethesda)">
        <title>The reference genome sequence of Saccharomyces cerevisiae: Then and now.</title>
        <authorList>
            <person name="Engel S.R."/>
            <person name="Dietrich F.S."/>
            <person name="Fisk D.G."/>
            <person name="Binkley G."/>
            <person name="Balakrishnan R."/>
            <person name="Costanzo M.C."/>
            <person name="Dwight S.S."/>
            <person name="Hitz B.C."/>
            <person name="Karra K."/>
            <person name="Nash R.S."/>
            <person name="Weng S."/>
            <person name="Wong E.D."/>
            <person name="Lloyd P."/>
            <person name="Skrzypek M.S."/>
            <person name="Miyasato S.R."/>
            <person name="Simison M."/>
            <person name="Cherry J.M."/>
        </authorList>
    </citation>
    <scope>GENOME REANNOTATION</scope>
    <source>
        <strain>ATCC 204508 / S288c</strain>
    </source>
</reference>
<reference key="4">
    <citation type="journal article" date="1999" name="J. Bacteriol.">
        <title>Amino acid residues in the omega-minus region participate in cellular localization of yeast glycosylphosphatidylinositol-attached proteins.</title>
        <authorList>
            <person name="Hamada K."/>
            <person name="Terashima H."/>
            <person name="Arisawa M."/>
            <person name="Yabuki N."/>
            <person name="Kitada K."/>
        </authorList>
    </citation>
    <scope>SUBCELLULAR LOCATION</scope>
</reference>
<reference key="5">
    <citation type="journal article" date="2007" name="Eukaryot. Cell">
        <title>GAS2 and GAS4, a pair of developmentally regulated genes required for spore wall assembly in Saccharomyces cerevisiae.</title>
        <authorList>
            <person name="Ragni E."/>
            <person name="Coluccio A."/>
            <person name="Rolli E."/>
            <person name="Rodriguez-Pena J.M."/>
            <person name="Colasante G."/>
            <person name="Arroyo J."/>
            <person name="Neiman A.M."/>
            <person name="Popolo L."/>
        </authorList>
    </citation>
    <scope>FUNCTION</scope>
    <scope>DEVELOPMENTAL STAGE</scope>
</reference>
<reference key="6">
    <citation type="journal article" date="2007" name="Yeast">
        <title>The Gas family of proteins of Saccharomyces cerevisiae: characterization and evolutionary analysis.</title>
        <authorList>
            <person name="Ragni E."/>
            <person name="Fontaine T."/>
            <person name="Gissi C."/>
            <person name="Latge J.-P."/>
            <person name="Popolo L."/>
        </authorList>
    </citation>
    <scope>FUNCTION</scope>
</reference>
<evidence type="ECO:0000250" key="1"/>
<evidence type="ECO:0000250" key="2">
    <source>
        <dbReference type="UniProtKB" id="Q06135"/>
    </source>
</evidence>
<evidence type="ECO:0000255" key="3"/>
<evidence type="ECO:0000269" key="4">
    <source>
    </source>
</evidence>
<evidence type="ECO:0000269" key="5">
    <source>
    </source>
</evidence>
<evidence type="ECO:0000305" key="6"/>
<evidence type="ECO:0000305" key="7">
    <source>
    </source>
</evidence>
<name>GAS4_YEAST</name>
<accession>Q08271</accession>
<accession>D6W1T6</accession>
<organism>
    <name type="scientific">Saccharomyces cerevisiae (strain ATCC 204508 / S288c)</name>
    <name type="common">Baker's yeast</name>
    <dbReference type="NCBI Taxonomy" id="559292"/>
    <lineage>
        <taxon>Eukaryota</taxon>
        <taxon>Fungi</taxon>
        <taxon>Dikarya</taxon>
        <taxon>Ascomycota</taxon>
        <taxon>Saccharomycotina</taxon>
        <taxon>Saccharomycetes</taxon>
        <taxon>Saccharomycetales</taxon>
        <taxon>Saccharomycetaceae</taxon>
        <taxon>Saccharomyces</taxon>
    </lineage>
</organism>
<gene>
    <name type="primary">GAS4</name>
    <name type="ordered locus">YOL132W</name>
</gene>
<feature type="signal peptide" evidence="3">
    <location>
        <begin position="1"/>
        <end position="21"/>
    </location>
</feature>
<feature type="chain" id="PRO_0000010479" description="1,3-beta-glucanosyltransferase GAS4">
    <location>
        <begin position="22"/>
        <end position="447"/>
    </location>
</feature>
<feature type="propeptide" id="PRO_0000010480" description="Removed in mature form" evidence="3">
    <location>
        <begin position="448"/>
        <end position="471"/>
    </location>
</feature>
<feature type="active site" description="Proton donor" evidence="1">
    <location>
        <position position="161"/>
    </location>
</feature>
<feature type="active site" description="Nucleophile" evidence="1">
    <location>
        <position position="266"/>
    </location>
</feature>
<feature type="binding site" evidence="2">
    <location>
        <position position="88"/>
    </location>
    <ligand>
        <name>(1,3-beta-D-glucosyl)n</name>
        <dbReference type="ChEBI" id="CHEBI:37671"/>
        <label>1</label>
        <note>donor substrate</note>
    </ligand>
</feature>
<feature type="binding site" evidence="2">
    <location>
        <position position="160"/>
    </location>
    <ligand>
        <name>(1,3-beta-D-glucosyl)n</name>
        <dbReference type="ChEBI" id="CHEBI:37671"/>
        <label>1</label>
        <note>donor substrate</note>
    </ligand>
</feature>
<feature type="binding site" evidence="2">
    <location>
        <position position="161"/>
    </location>
    <ligand>
        <name>(1,3-beta-D-glucosyl)n</name>
        <dbReference type="ChEBI" id="CHEBI:37671"/>
        <label>2</label>
        <note>acceptor substrate</note>
    </ligand>
</feature>
<feature type="binding site" evidence="2">
    <location>
        <position position="203"/>
    </location>
    <ligand>
        <name>(1,3-beta-D-glucosyl)n</name>
        <dbReference type="ChEBI" id="CHEBI:37671"/>
        <label>2</label>
        <note>acceptor substrate</note>
    </ligand>
</feature>
<feature type="binding site" evidence="2">
    <location>
        <position position="208"/>
    </location>
    <ligand>
        <name>(1,3-beta-D-glucosyl)n</name>
        <dbReference type="ChEBI" id="CHEBI:37671"/>
        <label>2</label>
        <note>acceptor substrate</note>
    </ligand>
</feature>
<feature type="binding site" evidence="2">
    <location>
        <position position="298"/>
    </location>
    <ligand>
        <name>(1,3-beta-D-glucosyl)n</name>
        <dbReference type="ChEBI" id="CHEBI:37671"/>
        <label>1</label>
        <note>donor substrate</note>
    </ligand>
</feature>
<feature type="lipid moiety-binding region" description="GPI-anchor amidated asparagine" evidence="3">
    <location>
        <position position="447"/>
    </location>
</feature>
<feature type="glycosylation site" description="N-linked (GlcNAc...) asparagine" evidence="3">
    <location>
        <position position="151"/>
    </location>
</feature>
<feature type="glycosylation site" description="N-linked (GlcNAc...) asparagine" evidence="3">
    <location>
        <position position="398"/>
    </location>
</feature>
<feature type="disulfide bond" evidence="2">
    <location>
        <begin position="70"/>
        <end position="99"/>
    </location>
</feature>
<feature type="disulfide bond" evidence="2">
    <location>
        <begin position="217"/>
        <end position="354"/>
    </location>
</feature>
<feature type="disulfide bond" evidence="2">
    <location>
        <begin position="238"/>
        <end position="269"/>
    </location>
</feature>
<comment type="function">
    <text evidence="4 5">Splits internally a 1,3-beta-glucan molecule and transfers the newly generated reducing end (the donor) to the non-reducing end of another 1,3-beta-glucan molecule (the acceptor) forming a 1,3-beta linkage, resulting in the elongation of 1,3-beta-glucan chains in the cell wall. Involved in spore wall assembly.</text>
</comment>
<comment type="subcellular location">
    <subcellularLocation>
        <location evidence="7">Cell membrane</location>
        <topology evidence="7">Lipid-anchor</topology>
        <topology evidence="7">GPI-anchor</topology>
    </subcellularLocation>
</comment>
<comment type="developmental stage">
    <text evidence="4">Expressed exclusively during sporulation (at protein level).</text>
</comment>
<comment type="similarity">
    <text evidence="6">Belongs to the glycosyl hydrolase 72 family.</text>
</comment>
<proteinExistence type="evidence at protein level"/>
<dbReference type="EC" id="2.4.1.-"/>
<dbReference type="EMBL" id="X95465">
    <property type="protein sequence ID" value="CAA64738.1"/>
    <property type="molecule type" value="Genomic_DNA"/>
</dbReference>
<dbReference type="EMBL" id="Z74874">
    <property type="protein sequence ID" value="CAA99152.1"/>
    <property type="molecule type" value="Genomic_DNA"/>
</dbReference>
<dbReference type="EMBL" id="BK006948">
    <property type="protein sequence ID" value="DAA10652.1"/>
    <property type="molecule type" value="Genomic_DNA"/>
</dbReference>
<dbReference type="PIR" id="S66829">
    <property type="entry name" value="S66829"/>
</dbReference>
<dbReference type="RefSeq" id="NP_014509.1">
    <property type="nucleotide sequence ID" value="NM_001183386.1"/>
</dbReference>
<dbReference type="SMR" id="Q08271"/>
<dbReference type="BioGRID" id="34243">
    <property type="interactions" value="86"/>
</dbReference>
<dbReference type="DIP" id="DIP-4898N"/>
<dbReference type="FunCoup" id="Q08271">
    <property type="interactions" value="58"/>
</dbReference>
<dbReference type="IntAct" id="Q08271">
    <property type="interactions" value="3"/>
</dbReference>
<dbReference type="MINT" id="Q08271"/>
<dbReference type="STRING" id="4932.YOL132W"/>
<dbReference type="CAZy" id="GH72">
    <property type="family name" value="Glycoside Hydrolase Family 72"/>
</dbReference>
<dbReference type="GlyCosmos" id="Q08271">
    <property type="glycosylation" value="2 sites, No reported glycans"/>
</dbReference>
<dbReference type="GlyGen" id="Q08271">
    <property type="glycosylation" value="2 sites"/>
</dbReference>
<dbReference type="PaxDb" id="4932-YOL132W"/>
<dbReference type="PeptideAtlas" id="Q08271"/>
<dbReference type="EnsemblFungi" id="YOL132W_mRNA">
    <property type="protein sequence ID" value="YOL132W"/>
    <property type="gene ID" value="YOL132W"/>
</dbReference>
<dbReference type="GeneID" id="853988"/>
<dbReference type="KEGG" id="sce:YOL132W"/>
<dbReference type="AGR" id="SGD:S000005492"/>
<dbReference type="SGD" id="S000005492">
    <property type="gene designation" value="GAS4"/>
</dbReference>
<dbReference type="VEuPathDB" id="FungiDB:YOL132W"/>
<dbReference type="eggNOG" id="ENOG502QRZZ">
    <property type="taxonomic scope" value="Eukaryota"/>
</dbReference>
<dbReference type="GeneTree" id="ENSGT00940000176308"/>
<dbReference type="HOGENOM" id="CLU_021855_1_2_1"/>
<dbReference type="InParanoid" id="Q08271"/>
<dbReference type="OMA" id="IRVYNID"/>
<dbReference type="OrthoDB" id="421038at2759"/>
<dbReference type="BioCyc" id="YEAST:G3O-33527-MONOMER"/>
<dbReference type="BioGRID-ORCS" id="853988">
    <property type="hits" value="5 hits in 10 CRISPR screens"/>
</dbReference>
<dbReference type="PRO" id="PR:Q08271"/>
<dbReference type="Proteomes" id="UP000002311">
    <property type="component" value="Chromosome XV"/>
</dbReference>
<dbReference type="RNAct" id="Q08271">
    <property type="molecule type" value="protein"/>
</dbReference>
<dbReference type="GO" id="GO:0009277">
    <property type="term" value="C:fungal-type cell wall"/>
    <property type="evidence" value="ECO:0000314"/>
    <property type="project" value="SGD"/>
</dbReference>
<dbReference type="GO" id="GO:0000324">
    <property type="term" value="C:fungal-type vacuole"/>
    <property type="evidence" value="ECO:0007005"/>
    <property type="project" value="SGD"/>
</dbReference>
<dbReference type="GO" id="GO:0005886">
    <property type="term" value="C:plasma membrane"/>
    <property type="evidence" value="ECO:0007669"/>
    <property type="project" value="UniProtKB-SubCell"/>
</dbReference>
<dbReference type="GO" id="GO:0098552">
    <property type="term" value="C:side of membrane"/>
    <property type="evidence" value="ECO:0007669"/>
    <property type="project" value="UniProtKB-KW"/>
</dbReference>
<dbReference type="GO" id="GO:0042124">
    <property type="term" value="F:1,3-beta-glucanosyltransferase activity"/>
    <property type="evidence" value="ECO:0000314"/>
    <property type="project" value="SGD"/>
</dbReference>
<dbReference type="GO" id="GO:0030476">
    <property type="term" value="P:ascospore wall assembly"/>
    <property type="evidence" value="ECO:0000315"/>
    <property type="project" value="SGD"/>
</dbReference>
<dbReference type="GO" id="GO:0071970">
    <property type="term" value="P:fungal-type cell wall (1-&gt;3)-beta-D-glucan biosynthetic process"/>
    <property type="evidence" value="ECO:0000318"/>
    <property type="project" value="GO_Central"/>
</dbReference>
<dbReference type="GO" id="GO:0031505">
    <property type="term" value="P:fungal-type cell wall organization"/>
    <property type="evidence" value="ECO:0000318"/>
    <property type="project" value="GO_Central"/>
</dbReference>
<dbReference type="FunFam" id="3.20.20.80:FF:000032">
    <property type="entry name" value="1,3-beta-glucanosyltransferase"/>
    <property type="match status" value="1"/>
</dbReference>
<dbReference type="Gene3D" id="3.20.20.80">
    <property type="entry name" value="Glycosidases"/>
    <property type="match status" value="1"/>
</dbReference>
<dbReference type="InterPro" id="IPR004886">
    <property type="entry name" value="Glucanosyltransferase"/>
</dbReference>
<dbReference type="InterPro" id="IPR017853">
    <property type="entry name" value="Glycoside_hydrolase_SF"/>
</dbReference>
<dbReference type="PANTHER" id="PTHR31468">
    <property type="entry name" value="1,3-BETA-GLUCANOSYLTRANSFERASE GAS1"/>
    <property type="match status" value="1"/>
</dbReference>
<dbReference type="PANTHER" id="PTHR31468:SF14">
    <property type="entry name" value="1,3-BETA-GLUCANOSYLTRANSFERASE GAS4"/>
    <property type="match status" value="1"/>
</dbReference>
<dbReference type="Pfam" id="PF03198">
    <property type="entry name" value="Glyco_hydro_72"/>
    <property type="match status" value="1"/>
</dbReference>
<dbReference type="SUPFAM" id="SSF51445">
    <property type="entry name" value="(Trans)glycosidases"/>
    <property type="match status" value="1"/>
</dbReference>